<organism>
    <name type="scientific">Aeropyrum pernix (strain ATCC 700893 / DSM 11879 / JCM 9820 / NBRC 100138 / K1)</name>
    <dbReference type="NCBI Taxonomy" id="272557"/>
    <lineage>
        <taxon>Archaea</taxon>
        <taxon>Thermoproteota</taxon>
        <taxon>Thermoprotei</taxon>
        <taxon>Desulfurococcales</taxon>
        <taxon>Desulfurococcaceae</taxon>
        <taxon>Aeropyrum</taxon>
    </lineage>
</organism>
<reference key="1">
    <citation type="journal article" date="1999" name="DNA Res.">
        <title>Complete genome sequence of an aerobic hyper-thermophilic crenarchaeon, Aeropyrum pernix K1.</title>
        <authorList>
            <person name="Kawarabayasi Y."/>
            <person name="Hino Y."/>
            <person name="Horikawa H."/>
            <person name="Yamazaki S."/>
            <person name="Haikawa Y."/>
            <person name="Jin-no K."/>
            <person name="Takahashi M."/>
            <person name="Sekine M."/>
            <person name="Baba S."/>
            <person name="Ankai A."/>
            <person name="Kosugi H."/>
            <person name="Hosoyama A."/>
            <person name="Fukui S."/>
            <person name="Nagai Y."/>
            <person name="Nishijima K."/>
            <person name="Nakazawa H."/>
            <person name="Takamiya M."/>
            <person name="Masuda S."/>
            <person name="Funahashi T."/>
            <person name="Tanaka T."/>
            <person name="Kudoh Y."/>
            <person name="Yamazaki J."/>
            <person name="Kushida N."/>
            <person name="Oguchi A."/>
            <person name="Aoki K."/>
            <person name="Kubota K."/>
            <person name="Nakamura Y."/>
            <person name="Nomura N."/>
            <person name="Sako Y."/>
            <person name="Kikuchi H."/>
        </authorList>
    </citation>
    <scope>NUCLEOTIDE SEQUENCE [LARGE SCALE GENOMIC DNA]</scope>
    <source>
        <strain>ATCC 700893 / DSM 11879 / JCM 9820 / NBRC 100138 / K1</strain>
    </source>
</reference>
<gene>
    <name evidence="1" type="primary">rpo6</name>
    <name evidence="1" type="synonym">rpoK</name>
    <name type="ordered locus">APE_0914</name>
</gene>
<name>RPO6_AERPE</name>
<proteinExistence type="inferred from homology"/>
<dbReference type="EC" id="2.7.7.6" evidence="1"/>
<dbReference type="EMBL" id="BA000002">
    <property type="protein sequence ID" value="BAA79898.1"/>
    <property type="status" value="ALT_INIT"/>
    <property type="molecule type" value="Genomic_DNA"/>
</dbReference>
<dbReference type="PIR" id="B72687">
    <property type="entry name" value="B72687"/>
</dbReference>
<dbReference type="SMR" id="Q9YDJ9"/>
<dbReference type="STRING" id="272557.APE_0914"/>
<dbReference type="EnsemblBacteria" id="BAA79898">
    <property type="protein sequence ID" value="BAA79898"/>
    <property type="gene ID" value="APE_0914"/>
</dbReference>
<dbReference type="KEGG" id="ape:APE_0914"/>
<dbReference type="eggNOG" id="arCOG01268">
    <property type="taxonomic scope" value="Archaea"/>
</dbReference>
<dbReference type="Proteomes" id="UP000002518">
    <property type="component" value="Chromosome"/>
</dbReference>
<dbReference type="GO" id="GO:0005737">
    <property type="term" value="C:cytoplasm"/>
    <property type="evidence" value="ECO:0007669"/>
    <property type="project" value="UniProtKB-SubCell"/>
</dbReference>
<dbReference type="GO" id="GO:0000428">
    <property type="term" value="C:DNA-directed RNA polymerase complex"/>
    <property type="evidence" value="ECO:0007669"/>
    <property type="project" value="UniProtKB-KW"/>
</dbReference>
<dbReference type="GO" id="GO:0003677">
    <property type="term" value="F:DNA binding"/>
    <property type="evidence" value="ECO:0007669"/>
    <property type="project" value="UniProtKB-UniRule"/>
</dbReference>
<dbReference type="GO" id="GO:0003899">
    <property type="term" value="F:DNA-directed RNA polymerase activity"/>
    <property type="evidence" value="ECO:0007669"/>
    <property type="project" value="UniProtKB-UniRule"/>
</dbReference>
<dbReference type="GO" id="GO:0006360">
    <property type="term" value="P:transcription by RNA polymerase I"/>
    <property type="evidence" value="ECO:0007669"/>
    <property type="project" value="TreeGrafter"/>
</dbReference>
<dbReference type="GO" id="GO:0006366">
    <property type="term" value="P:transcription by RNA polymerase II"/>
    <property type="evidence" value="ECO:0007669"/>
    <property type="project" value="TreeGrafter"/>
</dbReference>
<dbReference type="GO" id="GO:0042797">
    <property type="term" value="P:tRNA transcription by RNA polymerase III"/>
    <property type="evidence" value="ECO:0007669"/>
    <property type="project" value="TreeGrafter"/>
</dbReference>
<dbReference type="Gene3D" id="3.90.940.10">
    <property type="match status" value="1"/>
</dbReference>
<dbReference type="HAMAP" id="MF_00192">
    <property type="entry name" value="RNApol_arch_Rpo6"/>
    <property type="match status" value="1"/>
</dbReference>
<dbReference type="InterPro" id="IPR020708">
    <property type="entry name" value="DNA-dir_RNA_polK_14-18kDa_CS"/>
</dbReference>
<dbReference type="InterPro" id="IPR006110">
    <property type="entry name" value="Pol_omega/Rpo6/RPB6"/>
</dbReference>
<dbReference type="InterPro" id="IPR036161">
    <property type="entry name" value="RPB6/omega-like_sf"/>
</dbReference>
<dbReference type="InterPro" id="IPR006111">
    <property type="entry name" value="Rpo6/Rpb6"/>
</dbReference>
<dbReference type="NCBIfam" id="NF002207">
    <property type="entry name" value="PRK01099.1-2"/>
    <property type="match status" value="1"/>
</dbReference>
<dbReference type="NCBIfam" id="NF002208">
    <property type="entry name" value="PRK01099.1-3"/>
    <property type="match status" value="1"/>
</dbReference>
<dbReference type="PANTHER" id="PTHR47227">
    <property type="entry name" value="DNA-DIRECTED RNA POLYMERASE SUBUNIT K"/>
    <property type="match status" value="1"/>
</dbReference>
<dbReference type="PANTHER" id="PTHR47227:SF5">
    <property type="entry name" value="DNA-DIRECTED RNA POLYMERASES I, II, AND III SUBUNIT RPABC2"/>
    <property type="match status" value="1"/>
</dbReference>
<dbReference type="Pfam" id="PF01192">
    <property type="entry name" value="RNA_pol_Rpb6"/>
    <property type="match status" value="1"/>
</dbReference>
<dbReference type="PIRSF" id="PIRSF000778">
    <property type="entry name" value="RpoK/RPB6"/>
    <property type="match status" value="1"/>
</dbReference>
<dbReference type="SMART" id="SM01409">
    <property type="entry name" value="RNA_pol_Rpb6"/>
    <property type="match status" value="1"/>
</dbReference>
<dbReference type="SUPFAM" id="SSF63562">
    <property type="entry name" value="RPB6/omega subunit-like"/>
    <property type="match status" value="1"/>
</dbReference>
<dbReference type="PROSITE" id="PS01111">
    <property type="entry name" value="RNA_POL_K_14KD"/>
    <property type="match status" value="1"/>
</dbReference>
<comment type="function">
    <text evidence="1">DNA-dependent RNA polymerase (RNAP) catalyzes the transcription of DNA into RNA using the four ribonucleoside triphosphates as substrates.</text>
</comment>
<comment type="catalytic activity">
    <reaction evidence="1">
        <text>RNA(n) + a ribonucleoside 5'-triphosphate = RNA(n+1) + diphosphate</text>
        <dbReference type="Rhea" id="RHEA:21248"/>
        <dbReference type="Rhea" id="RHEA-COMP:14527"/>
        <dbReference type="Rhea" id="RHEA-COMP:17342"/>
        <dbReference type="ChEBI" id="CHEBI:33019"/>
        <dbReference type="ChEBI" id="CHEBI:61557"/>
        <dbReference type="ChEBI" id="CHEBI:140395"/>
        <dbReference type="EC" id="2.7.7.6"/>
    </reaction>
</comment>
<comment type="subunit">
    <text evidence="1">Part of the RNA polymerase complex.</text>
</comment>
<comment type="subcellular location">
    <subcellularLocation>
        <location evidence="1">Cytoplasm</location>
    </subcellularLocation>
</comment>
<comment type="similarity">
    <text evidence="1">Belongs to the archaeal Rpo6/eukaryotic RPB6 RNA polymerase subunit family.</text>
</comment>
<comment type="sequence caution" evidence="2">
    <conflict type="erroneous initiation">
        <sequence resource="EMBL-CDS" id="BAA79898"/>
    </conflict>
    <text>Extended N-terminus.</text>
</comment>
<feature type="chain" id="PRO_0000133808" description="DNA-directed RNA polymerase subunit Rpo6">
    <location>
        <begin position="1"/>
        <end position="89"/>
    </location>
</feature>
<accession>Q9YDJ9</accession>
<protein>
    <recommendedName>
        <fullName evidence="1">DNA-directed RNA polymerase subunit Rpo6</fullName>
        <ecNumber evidence="1">2.7.7.6</ecNumber>
    </recommendedName>
    <alternativeName>
        <fullName evidence="1">DNA-directed RNA polymerase subunit K</fullName>
    </alternativeName>
</protein>
<sequence length="89" mass="9771">MKIGPPYLTKYERARIIGVRAFQLSIGAPPLVDPERAGSRNPLDIARYEVDNGILPVSIYRYLPGGGGQSLSLSRLVELAREILGSEYV</sequence>
<evidence type="ECO:0000255" key="1">
    <source>
        <dbReference type="HAMAP-Rule" id="MF_00192"/>
    </source>
</evidence>
<evidence type="ECO:0000305" key="2"/>
<keyword id="KW-0963">Cytoplasm</keyword>
<keyword id="KW-0240">DNA-directed RNA polymerase</keyword>
<keyword id="KW-0548">Nucleotidyltransferase</keyword>
<keyword id="KW-1185">Reference proteome</keyword>
<keyword id="KW-0804">Transcription</keyword>
<keyword id="KW-0808">Transferase</keyword>